<name>YHAM_SALG2</name>
<evidence type="ECO:0000255" key="1">
    <source>
        <dbReference type="HAMAP-Rule" id="MF_01845"/>
    </source>
</evidence>
<organism>
    <name type="scientific">Salmonella gallinarum (strain 287/91 / NCTC 13346)</name>
    <dbReference type="NCBI Taxonomy" id="550538"/>
    <lineage>
        <taxon>Bacteria</taxon>
        <taxon>Pseudomonadati</taxon>
        <taxon>Pseudomonadota</taxon>
        <taxon>Gammaproteobacteria</taxon>
        <taxon>Enterobacterales</taxon>
        <taxon>Enterobacteriaceae</taxon>
        <taxon>Salmonella</taxon>
    </lineage>
</organism>
<dbReference type="EMBL" id="AM933173">
    <property type="protein sequence ID" value="CAR38934.1"/>
    <property type="molecule type" value="Genomic_DNA"/>
</dbReference>
<dbReference type="RefSeq" id="WP_000463079.1">
    <property type="nucleotide sequence ID" value="NC_011274.1"/>
</dbReference>
<dbReference type="SMR" id="B5REJ4"/>
<dbReference type="KEGG" id="seg:SG3134"/>
<dbReference type="HOGENOM" id="CLU_051840_0_0_6"/>
<dbReference type="Proteomes" id="UP000008321">
    <property type="component" value="Chromosome"/>
</dbReference>
<dbReference type="GO" id="GO:0080146">
    <property type="term" value="F:L-cysteine desulfhydrase activity"/>
    <property type="evidence" value="ECO:0007669"/>
    <property type="project" value="TreeGrafter"/>
</dbReference>
<dbReference type="GO" id="GO:0019450">
    <property type="term" value="P:L-cysteine catabolic process to pyruvate"/>
    <property type="evidence" value="ECO:0007669"/>
    <property type="project" value="TreeGrafter"/>
</dbReference>
<dbReference type="HAMAP" id="MF_01845">
    <property type="entry name" value="UPF0597"/>
    <property type="match status" value="1"/>
</dbReference>
<dbReference type="InterPro" id="IPR005130">
    <property type="entry name" value="Ser_deHydtase-like_asu"/>
</dbReference>
<dbReference type="InterPro" id="IPR021144">
    <property type="entry name" value="UPF0597"/>
</dbReference>
<dbReference type="PANTHER" id="PTHR30501">
    <property type="entry name" value="UPF0597 PROTEIN YHAM"/>
    <property type="match status" value="1"/>
</dbReference>
<dbReference type="PANTHER" id="PTHR30501:SF2">
    <property type="entry name" value="UPF0597 PROTEIN YHAM"/>
    <property type="match status" value="1"/>
</dbReference>
<dbReference type="Pfam" id="PF03313">
    <property type="entry name" value="SDH_alpha"/>
    <property type="match status" value="1"/>
</dbReference>
<dbReference type="PIRSF" id="PIRSF006054">
    <property type="entry name" value="UCP006054"/>
    <property type="match status" value="1"/>
</dbReference>
<sequence>MFESKINPLWQSFILAVQEEVKPALGCTEPISLALAAAAAAAELDGTVERIDAWVSPNLMKNGMGVTVPGTGMVGLPIAAALGALGGDAKAGLEVLKDASAKAVADAKAMLASGHVAVMLQEPCNDILFSRAKVYSGDSWACVTIVGDHTNIVRIETNKGVVFTQADNAQEEEKNSPLGVLSHTSLEEILAFVNAVPFDAIRFILDAARLNGALSQEGLRGSWGLHIGSTLAKQCDRGLLAKDLSTAILIRTSAASDARMGGATLPAMSNSGSGNQGITATVPVMVVAEHVGADDERLARALMLSHLSAIYIHHQLPRLSALCAATTAAMGAAAGMAWLIDGRYDTIAMAISSMIGDVSGMICDGASNSCAMKVSTSASAAWKAVLMALDDTAVTGNEGIVAHNVEQSIANLCSLACRSMQQTDKQIIEIMASKAH</sequence>
<comment type="similarity">
    <text evidence="1">Belongs to the UPF0597 family.</text>
</comment>
<gene>
    <name evidence="1" type="primary">yhaM</name>
    <name type="ordered locus">SG3134</name>
</gene>
<proteinExistence type="inferred from homology"/>
<reference key="1">
    <citation type="journal article" date="2008" name="Genome Res.">
        <title>Comparative genome analysis of Salmonella enteritidis PT4 and Salmonella gallinarum 287/91 provides insights into evolutionary and host adaptation pathways.</title>
        <authorList>
            <person name="Thomson N.R."/>
            <person name="Clayton D.J."/>
            <person name="Windhorst D."/>
            <person name="Vernikos G."/>
            <person name="Davidson S."/>
            <person name="Churcher C."/>
            <person name="Quail M.A."/>
            <person name="Stevens M."/>
            <person name="Jones M.A."/>
            <person name="Watson M."/>
            <person name="Barron A."/>
            <person name="Layton A."/>
            <person name="Pickard D."/>
            <person name="Kingsley R.A."/>
            <person name="Bignell A."/>
            <person name="Clark L."/>
            <person name="Harris B."/>
            <person name="Ormond D."/>
            <person name="Abdellah Z."/>
            <person name="Brooks K."/>
            <person name="Cherevach I."/>
            <person name="Chillingworth T."/>
            <person name="Woodward J."/>
            <person name="Norberczak H."/>
            <person name="Lord A."/>
            <person name="Arrowsmith C."/>
            <person name="Jagels K."/>
            <person name="Moule S."/>
            <person name="Mungall K."/>
            <person name="Saunders M."/>
            <person name="Whitehead S."/>
            <person name="Chabalgoity J.A."/>
            <person name="Maskell D."/>
            <person name="Humphreys T."/>
            <person name="Roberts M."/>
            <person name="Barrow P.A."/>
            <person name="Dougan G."/>
            <person name="Parkhill J."/>
        </authorList>
    </citation>
    <scope>NUCLEOTIDE SEQUENCE [LARGE SCALE GENOMIC DNA]</scope>
    <source>
        <strain>287/91 / NCTC 13346</strain>
    </source>
</reference>
<accession>B5REJ4</accession>
<feature type="chain" id="PRO_1000188466" description="UPF0597 protein YhaM">
    <location>
        <begin position="1"/>
        <end position="436"/>
    </location>
</feature>
<protein>
    <recommendedName>
        <fullName evidence="1">UPF0597 protein YhaM</fullName>
    </recommendedName>
</protein>